<sequence length="162" mass="17337">MRLTSKGRYAVTAMLDVALNSEAGPVPLADISERQGISLSYLEQLFSRLRKNGLVSSVRGPGGGYLLGKDASSIAVGEVISAVDESVDATRCQGKGGCQGGDKCLTHALWRDLSDRLTGFLNNITLGELVNNQEVLDVSGRQHTHDAPRTRTQDAIDVKLRA</sequence>
<reference key="1">
    <citation type="journal article" date="2009" name="PLoS Genet.">
        <title>Organised genome dynamics in the Escherichia coli species results in highly diverse adaptive paths.</title>
        <authorList>
            <person name="Touchon M."/>
            <person name="Hoede C."/>
            <person name="Tenaillon O."/>
            <person name="Barbe V."/>
            <person name="Baeriswyl S."/>
            <person name="Bidet P."/>
            <person name="Bingen E."/>
            <person name="Bonacorsi S."/>
            <person name="Bouchier C."/>
            <person name="Bouvet O."/>
            <person name="Calteau A."/>
            <person name="Chiapello H."/>
            <person name="Clermont O."/>
            <person name="Cruveiller S."/>
            <person name="Danchin A."/>
            <person name="Diard M."/>
            <person name="Dossat C."/>
            <person name="Karoui M.E."/>
            <person name="Frapy E."/>
            <person name="Garry L."/>
            <person name="Ghigo J.M."/>
            <person name="Gilles A.M."/>
            <person name="Johnson J."/>
            <person name="Le Bouguenec C."/>
            <person name="Lescat M."/>
            <person name="Mangenot S."/>
            <person name="Martinez-Jehanne V."/>
            <person name="Matic I."/>
            <person name="Nassif X."/>
            <person name="Oztas S."/>
            <person name="Petit M.A."/>
            <person name="Pichon C."/>
            <person name="Rouy Z."/>
            <person name="Ruf C.S."/>
            <person name="Schneider D."/>
            <person name="Tourret J."/>
            <person name="Vacherie B."/>
            <person name="Vallenet D."/>
            <person name="Medigue C."/>
            <person name="Rocha E.P.C."/>
            <person name="Denamur E."/>
        </authorList>
    </citation>
    <scope>NUCLEOTIDE SEQUENCE [LARGE SCALE GENOMIC DNA]</scope>
    <source>
        <strain>ED1a</strain>
    </source>
</reference>
<organism>
    <name type="scientific">Escherichia coli O81 (strain ED1a)</name>
    <dbReference type="NCBI Taxonomy" id="585397"/>
    <lineage>
        <taxon>Bacteria</taxon>
        <taxon>Pseudomonadati</taxon>
        <taxon>Pseudomonadota</taxon>
        <taxon>Gammaproteobacteria</taxon>
        <taxon>Enterobacterales</taxon>
        <taxon>Enterobacteriaceae</taxon>
        <taxon>Escherichia</taxon>
    </lineage>
</organism>
<gene>
    <name evidence="1" type="primary">iscR</name>
    <name type="ordered locus">ECED1_2962</name>
</gene>
<keyword id="KW-0001">2Fe-2S</keyword>
<keyword id="KW-0010">Activator</keyword>
<keyword id="KW-0238">DNA-binding</keyword>
<keyword id="KW-0408">Iron</keyword>
<keyword id="KW-0411">Iron-sulfur</keyword>
<keyword id="KW-0479">Metal-binding</keyword>
<keyword id="KW-0678">Repressor</keyword>
<keyword id="KW-0804">Transcription</keyword>
<keyword id="KW-0805">Transcription regulation</keyword>
<feature type="chain" id="PRO_1000164417" description="HTH-type transcriptional regulator IscR">
    <location>
        <begin position="1"/>
        <end position="162"/>
    </location>
</feature>
<feature type="domain" description="HTH rrf2-type" evidence="1">
    <location>
        <begin position="2"/>
        <end position="131"/>
    </location>
</feature>
<feature type="DNA-binding region" description="H-T-H motif" evidence="1">
    <location>
        <begin position="28"/>
        <end position="51"/>
    </location>
</feature>
<feature type="region of interest" description="Disordered" evidence="2">
    <location>
        <begin position="140"/>
        <end position="162"/>
    </location>
</feature>
<feature type="compositionally biased region" description="Basic and acidic residues" evidence="2">
    <location>
        <begin position="143"/>
        <end position="162"/>
    </location>
</feature>
<feature type="binding site" evidence="1">
    <location>
        <position position="92"/>
    </location>
    <ligand>
        <name>[2Fe-2S] cluster</name>
        <dbReference type="ChEBI" id="CHEBI:190135"/>
    </ligand>
</feature>
<feature type="binding site" evidence="1">
    <location>
        <position position="98"/>
    </location>
    <ligand>
        <name>[2Fe-2S] cluster</name>
        <dbReference type="ChEBI" id="CHEBI:190135"/>
    </ligand>
</feature>
<feature type="binding site" evidence="1">
    <location>
        <position position="104"/>
    </location>
    <ligand>
        <name>[2Fe-2S] cluster</name>
        <dbReference type="ChEBI" id="CHEBI:190135"/>
    </ligand>
</feature>
<comment type="function">
    <text evidence="1">Regulates the transcription of several operons and genes involved in the biogenesis of Fe-S clusters and Fe-S-containing proteins.</text>
</comment>
<comment type="cofactor">
    <cofactor evidence="1">
        <name>[2Fe-2S] cluster</name>
        <dbReference type="ChEBI" id="CHEBI:190135"/>
    </cofactor>
    <text evidence="1">Binds 1 [2Fe-2S] cluster.</text>
</comment>
<proteinExistence type="inferred from homology"/>
<accession>B7MYG4</accession>
<dbReference type="EMBL" id="CU928162">
    <property type="protein sequence ID" value="CAR09130.2"/>
    <property type="molecule type" value="Genomic_DNA"/>
</dbReference>
<dbReference type="RefSeq" id="WP_001241357.1">
    <property type="nucleotide sequence ID" value="NC_011745.1"/>
</dbReference>
<dbReference type="SMR" id="B7MYG4"/>
<dbReference type="GeneID" id="86947421"/>
<dbReference type="KEGG" id="ecq:ECED1_2962"/>
<dbReference type="HOGENOM" id="CLU_107144_0_0_6"/>
<dbReference type="Proteomes" id="UP000000748">
    <property type="component" value="Chromosome"/>
</dbReference>
<dbReference type="GO" id="GO:0005829">
    <property type="term" value="C:cytosol"/>
    <property type="evidence" value="ECO:0007669"/>
    <property type="project" value="TreeGrafter"/>
</dbReference>
<dbReference type="GO" id="GO:0051537">
    <property type="term" value="F:2 iron, 2 sulfur cluster binding"/>
    <property type="evidence" value="ECO:0007669"/>
    <property type="project" value="UniProtKB-KW"/>
</dbReference>
<dbReference type="GO" id="GO:0003700">
    <property type="term" value="F:DNA-binding transcription factor activity"/>
    <property type="evidence" value="ECO:0007669"/>
    <property type="project" value="UniProtKB-UniRule"/>
</dbReference>
<dbReference type="GO" id="GO:0003690">
    <property type="term" value="F:double-stranded DNA binding"/>
    <property type="evidence" value="ECO:0007669"/>
    <property type="project" value="UniProtKB-UniRule"/>
</dbReference>
<dbReference type="GO" id="GO:0005506">
    <property type="term" value="F:iron ion binding"/>
    <property type="evidence" value="ECO:0007669"/>
    <property type="project" value="UniProtKB-UniRule"/>
</dbReference>
<dbReference type="FunFam" id="1.10.10.10:FF:000026">
    <property type="entry name" value="HTH-type transcriptional regulator IscR"/>
    <property type="match status" value="1"/>
</dbReference>
<dbReference type="Gene3D" id="1.10.10.10">
    <property type="entry name" value="Winged helix-like DNA-binding domain superfamily/Winged helix DNA-binding domain"/>
    <property type="match status" value="1"/>
</dbReference>
<dbReference type="HAMAP" id="MF_01176">
    <property type="entry name" value="HTH_type_IscR"/>
    <property type="match status" value="1"/>
</dbReference>
<dbReference type="InterPro" id="IPR010242">
    <property type="entry name" value="TF_HTH_IscR"/>
</dbReference>
<dbReference type="InterPro" id="IPR030489">
    <property type="entry name" value="TR_Rrf2-type_CS"/>
</dbReference>
<dbReference type="InterPro" id="IPR000944">
    <property type="entry name" value="Tscrpt_reg_Rrf2"/>
</dbReference>
<dbReference type="InterPro" id="IPR036388">
    <property type="entry name" value="WH-like_DNA-bd_sf"/>
</dbReference>
<dbReference type="InterPro" id="IPR036390">
    <property type="entry name" value="WH_DNA-bd_sf"/>
</dbReference>
<dbReference type="NCBIfam" id="TIGR02010">
    <property type="entry name" value="IscR"/>
    <property type="match status" value="1"/>
</dbReference>
<dbReference type="NCBIfam" id="NF008110">
    <property type="entry name" value="PRK10857.1"/>
    <property type="match status" value="1"/>
</dbReference>
<dbReference type="NCBIfam" id="TIGR00738">
    <property type="entry name" value="rrf2_super"/>
    <property type="match status" value="1"/>
</dbReference>
<dbReference type="PANTHER" id="PTHR33221:SF5">
    <property type="entry name" value="HTH-TYPE TRANSCRIPTIONAL REGULATOR ISCR"/>
    <property type="match status" value="1"/>
</dbReference>
<dbReference type="PANTHER" id="PTHR33221">
    <property type="entry name" value="WINGED HELIX-TURN-HELIX TRANSCRIPTIONAL REGULATOR, RRF2 FAMILY"/>
    <property type="match status" value="1"/>
</dbReference>
<dbReference type="Pfam" id="PF02082">
    <property type="entry name" value="Rrf2"/>
    <property type="match status" value="1"/>
</dbReference>
<dbReference type="SUPFAM" id="SSF46785">
    <property type="entry name" value="Winged helix' DNA-binding domain"/>
    <property type="match status" value="1"/>
</dbReference>
<dbReference type="PROSITE" id="PS01332">
    <property type="entry name" value="HTH_RRF2_1"/>
    <property type="match status" value="1"/>
</dbReference>
<dbReference type="PROSITE" id="PS51197">
    <property type="entry name" value="HTH_RRF2_2"/>
    <property type="match status" value="1"/>
</dbReference>
<evidence type="ECO:0000255" key="1">
    <source>
        <dbReference type="HAMAP-Rule" id="MF_01176"/>
    </source>
</evidence>
<evidence type="ECO:0000256" key="2">
    <source>
        <dbReference type="SAM" id="MobiDB-lite"/>
    </source>
</evidence>
<protein>
    <recommendedName>
        <fullName evidence="1">HTH-type transcriptional regulator IscR</fullName>
    </recommendedName>
</protein>
<name>ISCR_ECO81</name>